<accession>P67861</accession>
<accession>C0K3N9</accession>
<keyword id="KW-0002">3D-structure</keyword>
<keyword id="KW-0903">Direct protein sequencing</keyword>
<keyword id="KW-1015">Disulfide bond</keyword>
<keyword id="KW-0339">Growth factor</keyword>
<keyword id="KW-0873">Pyrrolidone carboxylic acid</keyword>
<keyword id="KW-0964">Secreted</keyword>
<keyword id="KW-0732">Signal</keyword>
<keyword id="KW-0800">Toxin</keyword>
<feature type="signal peptide" evidence="3">
    <location>
        <begin position="1"/>
        <end position="24"/>
    </location>
</feature>
<feature type="chain" id="PRO_0000162362" description="Snake venom vascular endothelial growth factor toxin VR-1" evidence="3">
    <location>
        <begin position="25"/>
        <end position="133"/>
    </location>
</feature>
<feature type="propeptide" id="PRO_0000406344" evidence="7">
    <location>
        <begin position="134"/>
        <end position="144"/>
    </location>
</feature>
<feature type="region of interest" description="Disordered" evidence="2">
    <location>
        <begin position="120"/>
        <end position="144"/>
    </location>
</feature>
<feature type="compositionally biased region" description="Basic and acidic residues" evidence="2">
    <location>
        <begin position="120"/>
        <end position="134"/>
    </location>
</feature>
<feature type="modified residue" description="Pyrrolidone carboxylic acid" evidence="3">
    <location>
        <position position="25"/>
    </location>
</feature>
<feature type="disulfide bond" evidence="4 8">
    <location>
        <begin position="38"/>
        <end position="80"/>
    </location>
</feature>
<feature type="disulfide bond" description="Interchain (with C-72)" evidence="4 8">
    <location>
        <position position="63"/>
    </location>
</feature>
<feature type="disulfide bond" evidence="4 8">
    <location>
        <begin position="69"/>
        <end position="115"/>
    </location>
</feature>
<feature type="disulfide bond" description="Interchain (with C-63)" evidence="4 8">
    <location>
        <position position="72"/>
    </location>
</feature>
<feature type="disulfide bond" evidence="4 8">
    <location>
        <begin position="73"/>
        <end position="117"/>
    </location>
</feature>
<feature type="helix" evidence="9">
    <location>
        <begin position="29"/>
        <end position="36"/>
    </location>
</feature>
<feature type="strand" evidence="9">
    <location>
        <begin position="37"/>
        <end position="46"/>
    </location>
</feature>
<feature type="helix" evidence="9">
    <location>
        <begin position="47"/>
        <end position="50"/>
    </location>
</feature>
<feature type="strand" evidence="9">
    <location>
        <begin position="56"/>
        <end position="70"/>
    </location>
</feature>
<feature type="strand" evidence="9">
    <location>
        <begin position="78"/>
        <end position="95"/>
    </location>
</feature>
<feature type="turn" evidence="9">
    <location>
        <begin position="97"/>
        <end position="99"/>
    </location>
</feature>
<feature type="strand" evidence="9">
    <location>
        <begin position="102"/>
        <end position="119"/>
    </location>
</feature>
<name>TXVE_DABRR</name>
<dbReference type="EMBL" id="FJ554643">
    <property type="protein sequence ID" value="ACN22046.1"/>
    <property type="molecule type" value="mRNA"/>
</dbReference>
<dbReference type="PDB" id="1WQ9">
    <property type="method" value="X-ray"/>
    <property type="resolution" value="2.00 A"/>
    <property type="chains" value="A/B=26-119"/>
</dbReference>
<dbReference type="PDBsum" id="1WQ9"/>
<dbReference type="SMR" id="P67861"/>
<dbReference type="EvolutionaryTrace" id="P67861"/>
<dbReference type="GO" id="GO:0005615">
    <property type="term" value="C:extracellular space"/>
    <property type="evidence" value="ECO:0007669"/>
    <property type="project" value="TreeGrafter"/>
</dbReference>
<dbReference type="GO" id="GO:0016020">
    <property type="term" value="C:membrane"/>
    <property type="evidence" value="ECO:0007669"/>
    <property type="project" value="InterPro"/>
</dbReference>
<dbReference type="GO" id="GO:0042056">
    <property type="term" value="F:chemoattractant activity"/>
    <property type="evidence" value="ECO:0007669"/>
    <property type="project" value="TreeGrafter"/>
</dbReference>
<dbReference type="GO" id="GO:0008083">
    <property type="term" value="F:growth factor activity"/>
    <property type="evidence" value="ECO:0007669"/>
    <property type="project" value="UniProtKB-KW"/>
</dbReference>
<dbReference type="GO" id="GO:0090729">
    <property type="term" value="F:toxin activity"/>
    <property type="evidence" value="ECO:0007669"/>
    <property type="project" value="UniProtKB-KW"/>
</dbReference>
<dbReference type="GO" id="GO:0005172">
    <property type="term" value="F:vascular endothelial growth factor receptor binding"/>
    <property type="evidence" value="ECO:0007669"/>
    <property type="project" value="TreeGrafter"/>
</dbReference>
<dbReference type="GO" id="GO:0050930">
    <property type="term" value="P:induction of positive chemotaxis"/>
    <property type="evidence" value="ECO:0007669"/>
    <property type="project" value="TreeGrafter"/>
</dbReference>
<dbReference type="GO" id="GO:0045766">
    <property type="term" value="P:positive regulation of angiogenesis"/>
    <property type="evidence" value="ECO:0007669"/>
    <property type="project" value="TreeGrafter"/>
</dbReference>
<dbReference type="GO" id="GO:0001938">
    <property type="term" value="P:positive regulation of endothelial cell proliferation"/>
    <property type="evidence" value="ECO:0007669"/>
    <property type="project" value="TreeGrafter"/>
</dbReference>
<dbReference type="GO" id="GO:0060754">
    <property type="term" value="P:positive regulation of mast cell chemotaxis"/>
    <property type="evidence" value="ECO:0007669"/>
    <property type="project" value="TreeGrafter"/>
</dbReference>
<dbReference type="GO" id="GO:0001666">
    <property type="term" value="P:response to hypoxia"/>
    <property type="evidence" value="ECO:0007669"/>
    <property type="project" value="TreeGrafter"/>
</dbReference>
<dbReference type="GO" id="GO:0002040">
    <property type="term" value="P:sprouting angiogenesis"/>
    <property type="evidence" value="ECO:0007669"/>
    <property type="project" value="TreeGrafter"/>
</dbReference>
<dbReference type="GO" id="GO:0048010">
    <property type="term" value="P:vascular endothelial growth factor receptor signaling pathway"/>
    <property type="evidence" value="ECO:0007669"/>
    <property type="project" value="TreeGrafter"/>
</dbReference>
<dbReference type="GO" id="GO:0038084">
    <property type="term" value="P:vascular endothelial growth factor signaling pathway"/>
    <property type="evidence" value="ECO:0007669"/>
    <property type="project" value="TreeGrafter"/>
</dbReference>
<dbReference type="CDD" id="cd00135">
    <property type="entry name" value="PDGF"/>
    <property type="match status" value="1"/>
</dbReference>
<dbReference type="Gene3D" id="2.10.90.10">
    <property type="entry name" value="Cystine-knot cytokines"/>
    <property type="match status" value="1"/>
</dbReference>
<dbReference type="InterPro" id="IPR029034">
    <property type="entry name" value="Cystine-knot_cytokine"/>
</dbReference>
<dbReference type="InterPro" id="IPR023581">
    <property type="entry name" value="PD_growth_factor_CS"/>
</dbReference>
<dbReference type="InterPro" id="IPR000072">
    <property type="entry name" value="PDGF/VEGF_dom"/>
</dbReference>
<dbReference type="InterPro" id="IPR050507">
    <property type="entry name" value="PDGF/VEGF_growth_factor"/>
</dbReference>
<dbReference type="PANTHER" id="PTHR12025">
    <property type="entry name" value="VASCULAR ENDOTHELIAL GROWTH FACTOR"/>
    <property type="match status" value="1"/>
</dbReference>
<dbReference type="PANTHER" id="PTHR12025:SF5">
    <property type="entry name" value="VASCULAR ENDOTHELIAL GROWTH FACTOR A, LONG FORM"/>
    <property type="match status" value="1"/>
</dbReference>
<dbReference type="Pfam" id="PF00341">
    <property type="entry name" value="PDGF"/>
    <property type="match status" value="1"/>
</dbReference>
<dbReference type="SMART" id="SM00141">
    <property type="entry name" value="PDGF"/>
    <property type="match status" value="1"/>
</dbReference>
<dbReference type="SUPFAM" id="SSF57501">
    <property type="entry name" value="Cystine-knot cytokines"/>
    <property type="match status" value="1"/>
</dbReference>
<dbReference type="PROSITE" id="PS00249">
    <property type="entry name" value="PDGF_1"/>
    <property type="match status" value="1"/>
</dbReference>
<dbReference type="PROSITE" id="PS50278">
    <property type="entry name" value="PDGF_2"/>
    <property type="match status" value="1"/>
</dbReference>
<protein>
    <recommendedName>
        <fullName evidence="5">Snake venom vascular endothelial growth factor toxin VR-1</fullName>
        <shortName>svVEGF</shortName>
    </recommendedName>
    <alternativeName>
        <fullName evidence="1">VEGF-F</fullName>
    </alternativeName>
</protein>
<evidence type="ECO:0000250" key="1">
    <source>
        <dbReference type="UniProtKB" id="P0DL42"/>
    </source>
</evidence>
<evidence type="ECO:0000256" key="2">
    <source>
        <dbReference type="SAM" id="MobiDB-lite"/>
    </source>
</evidence>
<evidence type="ECO:0000269" key="3">
    <source>
    </source>
</evidence>
<evidence type="ECO:0000269" key="4">
    <source>
    </source>
</evidence>
<evidence type="ECO:0000303" key="5">
    <source>
    </source>
</evidence>
<evidence type="ECO:0000305" key="6"/>
<evidence type="ECO:0000305" key="7">
    <source>
    </source>
</evidence>
<evidence type="ECO:0007744" key="8">
    <source>
        <dbReference type="PDB" id="1WQ9"/>
    </source>
</evidence>
<evidence type="ECO:0007829" key="9">
    <source>
        <dbReference type="PDB" id="1WQ9"/>
    </source>
</evidence>
<comment type="function">
    <text evidence="3">Snake venom VEGFs may contribute to venom dispersion and prey subjugation by inducing vascular permeability and hypotension. This protein induces angiogenesis probably through VEGF receptor (KDR/VEGFR-2) signaling, as well as drastic hypotension. The hypotension is mediated by nitric oxide, which is produced by VEGF-activated endothelium NO synthase. May also induce vascular permeability.</text>
</comment>
<comment type="subunit">
    <text evidence="3 4">Homodimer; disulfide-linked (PubMed:15542594). Interacts with VEGF receptor-2 (KDR) with high affinity, but not with VEGF receptor-1 (Flt-1), VEGF receptor-3 (FLT4), and neuropilin-1 (NRP1) (PubMed:14600159).</text>
</comment>
<comment type="subcellular location">
    <subcellularLocation>
        <location evidence="3">Secreted</location>
    </subcellularLocation>
</comment>
<comment type="tissue specificity">
    <text evidence="7">Expressed by the venom gland.</text>
</comment>
<comment type="similarity">
    <text evidence="6">Belongs to the PDGF/VEGF growth factor family. Snake venom VEGF subfamily.</text>
</comment>
<proteinExistence type="evidence at protein level"/>
<reference key="1">
    <citation type="journal article" date="2009" name="J. Biol. Chem.">
        <title>Snake venom vascular endothelial growth factors (VEGF-Fs) exclusively vary their structures and functions among species.</title>
        <authorList>
            <person name="Yamazaki Y."/>
            <person name="Matsunaga Y."/>
            <person name="Tokunaga Y."/>
            <person name="Obayashi S."/>
            <person name="Saito M."/>
            <person name="Morita T."/>
        </authorList>
    </citation>
    <scope>NUCLEOTIDE SEQUENCE [MRNA]</scope>
    <source>
        <tissue>Venom gland</tissue>
    </source>
</reference>
<reference key="2">
    <citation type="journal article" date="2003" name="J. Biol. Chem.">
        <title>Snake venom vascular endothelial growth factors (VEGFs) exhibit potent activity through their specific recognition of KDR (VEGF receptor 2).</title>
        <authorList>
            <person name="Yamazaki Y."/>
            <person name="Takani K."/>
            <person name="Atoda H."/>
            <person name="Morita T."/>
        </authorList>
    </citation>
    <scope>PROTEIN SEQUENCE OF 25-133</scope>
    <scope>FUNCTION</scope>
    <scope>SUBUNIT</scope>
    <scope>INTERACTION WITH KDR</scope>
    <scope>SUBCELLULAR LOCATION</scope>
    <scope>PYROGLUTAMATE FORMATION AT GLN-25</scope>
    <source>
        <tissue>Venom</tissue>
    </source>
</reference>
<reference key="3">
    <citation type="journal article" date="2005" name="J. Biol. Chem.">
        <title>Crystal structures of novel vascular endothelial growth factors (VEGF) from snake venoms: insight into selective VEGF binding to kinase insert domain-containing receptor but not to fms-like tyrosine kinase-1.</title>
        <authorList>
            <person name="Suto K."/>
            <person name="Yamazaki Y."/>
            <person name="Morita T."/>
            <person name="Mizuno H."/>
        </authorList>
    </citation>
    <scope>X-RAY CRYSTALLOGRAPHY (2.0 ANGSTROMS) OF 26-119</scope>
    <scope>DISULFIDE BONDS</scope>
    <scope>SUBUNIT</scope>
</reference>
<sequence length="144" mass="16278">MAAYLLAVAILFCIQGWPSGTVQGQVRPFLDVYERSACQTRETLVSILQEHPDEISDIFRPSCVAVLRCSGCCTDESMKCTPVGKHTADIQIMRMNPRTHSSKMEVMKFMEHTACECRPRWKQGEPEGPKEPRRGGVRAKFPFD</sequence>
<organism>
    <name type="scientific">Daboia russelii</name>
    <name type="common">Russel's viper</name>
    <name type="synonym">Vipera russelii</name>
    <dbReference type="NCBI Taxonomy" id="8707"/>
    <lineage>
        <taxon>Eukaryota</taxon>
        <taxon>Metazoa</taxon>
        <taxon>Chordata</taxon>
        <taxon>Craniata</taxon>
        <taxon>Vertebrata</taxon>
        <taxon>Euteleostomi</taxon>
        <taxon>Lepidosauria</taxon>
        <taxon>Squamata</taxon>
        <taxon>Bifurcata</taxon>
        <taxon>Unidentata</taxon>
        <taxon>Episquamata</taxon>
        <taxon>Toxicofera</taxon>
        <taxon>Serpentes</taxon>
        <taxon>Colubroidea</taxon>
        <taxon>Viperidae</taxon>
        <taxon>Viperinae</taxon>
        <taxon>Daboia</taxon>
    </lineage>
</organism>